<comment type="function">
    <text evidence="1">Catalyzes the interconversion of 2-phosphoglycerate and 3-phosphoglycerate.</text>
</comment>
<comment type="catalytic activity">
    <reaction evidence="1">
        <text>(2R)-2-phosphoglycerate = (2R)-3-phosphoglycerate</text>
        <dbReference type="Rhea" id="RHEA:15901"/>
        <dbReference type="ChEBI" id="CHEBI:58272"/>
        <dbReference type="ChEBI" id="CHEBI:58289"/>
        <dbReference type="EC" id="5.4.2.11"/>
    </reaction>
</comment>
<comment type="pathway">
    <text evidence="1">Carbohydrate degradation; glycolysis; pyruvate from D-glyceraldehyde 3-phosphate: step 3/5.</text>
</comment>
<comment type="similarity">
    <text evidence="1">Belongs to the phosphoglycerate mutase family. BPG-dependent PGAM subfamily.</text>
</comment>
<reference key="1">
    <citation type="journal article" date="2009" name="J. Bacteriol.">
        <title>Role of conjugative elements in the evolution of the multidrug-resistant pandemic clone Streptococcus pneumoniae Spain23F ST81.</title>
        <authorList>
            <person name="Croucher N.J."/>
            <person name="Walker D."/>
            <person name="Romero P."/>
            <person name="Lennard N."/>
            <person name="Paterson G.K."/>
            <person name="Bason N.C."/>
            <person name="Mitchell A.M."/>
            <person name="Quail M.A."/>
            <person name="Andrew P.W."/>
            <person name="Parkhill J."/>
            <person name="Bentley S.D."/>
            <person name="Mitchell T.J."/>
        </authorList>
    </citation>
    <scope>NUCLEOTIDE SEQUENCE [LARGE SCALE GENOMIC DNA]</scope>
    <source>
        <strain>ATCC 700669 / Spain 23F-1</strain>
    </source>
</reference>
<name>GPMA_STRPJ</name>
<dbReference type="EC" id="5.4.2.11" evidence="1"/>
<dbReference type="EMBL" id="FM211187">
    <property type="protein sequence ID" value="CAR69430.1"/>
    <property type="molecule type" value="Genomic_DNA"/>
</dbReference>
<dbReference type="RefSeq" id="WP_000240132.1">
    <property type="nucleotide sequence ID" value="NC_011900.1"/>
</dbReference>
<dbReference type="SMR" id="B8ZM52"/>
<dbReference type="KEGG" id="sne:SPN23F16570"/>
<dbReference type="HOGENOM" id="CLU_033323_1_5_9"/>
<dbReference type="UniPathway" id="UPA00109">
    <property type="reaction ID" value="UER00186"/>
</dbReference>
<dbReference type="GO" id="GO:0004619">
    <property type="term" value="F:phosphoglycerate mutase activity"/>
    <property type="evidence" value="ECO:0007669"/>
    <property type="project" value="UniProtKB-EC"/>
</dbReference>
<dbReference type="GO" id="GO:0006094">
    <property type="term" value="P:gluconeogenesis"/>
    <property type="evidence" value="ECO:0007669"/>
    <property type="project" value="UniProtKB-UniRule"/>
</dbReference>
<dbReference type="GO" id="GO:0006096">
    <property type="term" value="P:glycolytic process"/>
    <property type="evidence" value="ECO:0007669"/>
    <property type="project" value="UniProtKB-UniRule"/>
</dbReference>
<dbReference type="CDD" id="cd07067">
    <property type="entry name" value="HP_PGM_like"/>
    <property type="match status" value="1"/>
</dbReference>
<dbReference type="FunFam" id="3.40.50.1240:FF:000003">
    <property type="entry name" value="2,3-bisphosphoglycerate-dependent phosphoglycerate mutase"/>
    <property type="match status" value="1"/>
</dbReference>
<dbReference type="Gene3D" id="3.40.50.1240">
    <property type="entry name" value="Phosphoglycerate mutase-like"/>
    <property type="match status" value="1"/>
</dbReference>
<dbReference type="HAMAP" id="MF_01039">
    <property type="entry name" value="PGAM_GpmA"/>
    <property type="match status" value="1"/>
</dbReference>
<dbReference type="InterPro" id="IPR013078">
    <property type="entry name" value="His_Pase_superF_clade-1"/>
</dbReference>
<dbReference type="InterPro" id="IPR029033">
    <property type="entry name" value="His_PPase_superfam"/>
</dbReference>
<dbReference type="InterPro" id="IPR005952">
    <property type="entry name" value="Phosphogly_mut1"/>
</dbReference>
<dbReference type="NCBIfam" id="TIGR01258">
    <property type="entry name" value="pgm_1"/>
    <property type="match status" value="1"/>
</dbReference>
<dbReference type="NCBIfam" id="NF010713">
    <property type="entry name" value="PRK14115.1"/>
    <property type="match status" value="1"/>
</dbReference>
<dbReference type="NCBIfam" id="NF010715">
    <property type="entry name" value="PRK14117.1"/>
    <property type="match status" value="1"/>
</dbReference>
<dbReference type="PANTHER" id="PTHR11931">
    <property type="entry name" value="PHOSPHOGLYCERATE MUTASE"/>
    <property type="match status" value="1"/>
</dbReference>
<dbReference type="Pfam" id="PF00300">
    <property type="entry name" value="His_Phos_1"/>
    <property type="match status" value="1"/>
</dbReference>
<dbReference type="PIRSF" id="PIRSF000709">
    <property type="entry name" value="6PFK_2-Ptase"/>
    <property type="match status" value="1"/>
</dbReference>
<dbReference type="SMART" id="SM00855">
    <property type="entry name" value="PGAM"/>
    <property type="match status" value="1"/>
</dbReference>
<dbReference type="SUPFAM" id="SSF53254">
    <property type="entry name" value="Phosphoglycerate mutase-like"/>
    <property type="match status" value="1"/>
</dbReference>
<organism>
    <name type="scientific">Streptococcus pneumoniae (strain ATCC 700669 / Spain 23F-1)</name>
    <dbReference type="NCBI Taxonomy" id="561276"/>
    <lineage>
        <taxon>Bacteria</taxon>
        <taxon>Bacillati</taxon>
        <taxon>Bacillota</taxon>
        <taxon>Bacilli</taxon>
        <taxon>Lactobacillales</taxon>
        <taxon>Streptococcaceae</taxon>
        <taxon>Streptococcus</taxon>
    </lineage>
</organism>
<gene>
    <name evidence="1" type="primary">gpmA</name>
    <name type="ordered locus">SPN23F16570</name>
</gene>
<feature type="chain" id="PRO_1000149533" description="2,3-bisphosphoglycerate-dependent phosphoglycerate mutase">
    <location>
        <begin position="1"/>
        <end position="230"/>
    </location>
</feature>
<feature type="active site" description="Tele-phosphohistidine intermediate" evidence="1">
    <location>
        <position position="9"/>
    </location>
</feature>
<feature type="active site" description="Proton donor/acceptor" evidence="1">
    <location>
        <position position="87"/>
    </location>
</feature>
<feature type="binding site" evidence="1">
    <location>
        <begin position="8"/>
        <end position="15"/>
    </location>
    <ligand>
        <name>substrate</name>
    </ligand>
</feature>
<feature type="binding site" evidence="1">
    <location>
        <begin position="21"/>
        <end position="22"/>
    </location>
    <ligand>
        <name>substrate</name>
    </ligand>
</feature>
<feature type="binding site" evidence="1">
    <location>
        <position position="60"/>
    </location>
    <ligand>
        <name>substrate</name>
    </ligand>
</feature>
<feature type="binding site" evidence="1">
    <location>
        <begin position="87"/>
        <end position="90"/>
    </location>
    <ligand>
        <name>substrate</name>
    </ligand>
</feature>
<feature type="binding site" evidence="1">
    <location>
        <position position="98"/>
    </location>
    <ligand>
        <name>substrate</name>
    </ligand>
</feature>
<feature type="binding site" evidence="1">
    <location>
        <begin position="114"/>
        <end position="115"/>
    </location>
    <ligand>
        <name>substrate</name>
    </ligand>
</feature>
<feature type="binding site" evidence="1">
    <location>
        <begin position="183"/>
        <end position="184"/>
    </location>
    <ligand>
        <name>substrate</name>
    </ligand>
</feature>
<feature type="site" description="Transition state stabilizer" evidence="1">
    <location>
        <position position="182"/>
    </location>
</feature>
<evidence type="ECO:0000255" key="1">
    <source>
        <dbReference type="HAMAP-Rule" id="MF_01039"/>
    </source>
</evidence>
<sequence length="230" mass="26050">MVKLVFARHGESEWNKANLFTGWADVDLSEKGTQQAIDAGKLIKEAGIKFDQAYTSVLKRAIKTTNLALEASDQLWVPVEKSWRLNERHYGGLTGKNKAEAAEQFGDEQVHIWRRSYDVLPPNMDRDDEHSAHTDRRYASLDDSVIPDAENLKVTLERALPFWEDKIAPALKDGKNVFVGAHGNSIRALVKHIKGLSDDEIMDVEIPNFPPLVFEFDEKLNVVSEYYLGK</sequence>
<proteinExistence type="inferred from homology"/>
<accession>B8ZM52</accession>
<protein>
    <recommendedName>
        <fullName evidence="1">2,3-bisphosphoglycerate-dependent phosphoglycerate mutase</fullName>
        <shortName evidence="1">BPG-dependent PGAM</shortName>
        <shortName evidence="1">PGAM</shortName>
        <shortName evidence="1">Phosphoglyceromutase</shortName>
        <shortName evidence="1">dPGM</shortName>
        <ecNumber evidence="1">5.4.2.11</ecNumber>
    </recommendedName>
</protein>
<keyword id="KW-0312">Gluconeogenesis</keyword>
<keyword id="KW-0324">Glycolysis</keyword>
<keyword id="KW-0413">Isomerase</keyword>